<dbReference type="EC" id="2.7.7.101" evidence="1"/>
<dbReference type="EMBL" id="M14427">
    <property type="protein sequence ID" value="AAA27241.1"/>
    <property type="molecule type" value="Genomic_DNA"/>
</dbReference>
<dbReference type="EMBL" id="AE006468">
    <property type="protein sequence ID" value="AAL22084.1"/>
    <property type="molecule type" value="Genomic_DNA"/>
</dbReference>
<dbReference type="PIR" id="B23985">
    <property type="entry name" value="RYEBT"/>
</dbReference>
<dbReference type="RefSeq" id="NP_462125.1">
    <property type="nucleotide sequence ID" value="NC_003197.2"/>
</dbReference>
<dbReference type="RefSeq" id="WP_000918865.1">
    <property type="nucleotide sequence ID" value="NC_003197.2"/>
</dbReference>
<dbReference type="SMR" id="P07362"/>
<dbReference type="STRING" id="99287.STM3210"/>
<dbReference type="PaxDb" id="99287-STM3210"/>
<dbReference type="GeneID" id="1254733"/>
<dbReference type="KEGG" id="stm:STM3210"/>
<dbReference type="PATRIC" id="fig|99287.12.peg.3406"/>
<dbReference type="HOGENOM" id="CLU_013501_5_1_6"/>
<dbReference type="OMA" id="LMWPIRD"/>
<dbReference type="PhylomeDB" id="P07362"/>
<dbReference type="BioCyc" id="SENT99287:STM3210-MONOMER"/>
<dbReference type="Proteomes" id="UP000001014">
    <property type="component" value="Chromosome"/>
</dbReference>
<dbReference type="GO" id="GO:0005737">
    <property type="term" value="C:cytoplasm"/>
    <property type="evidence" value="ECO:0000318"/>
    <property type="project" value="GO_Central"/>
</dbReference>
<dbReference type="GO" id="GO:0000428">
    <property type="term" value="C:DNA-directed RNA polymerase complex"/>
    <property type="evidence" value="ECO:0007669"/>
    <property type="project" value="UniProtKB-KW"/>
</dbReference>
<dbReference type="GO" id="GO:1990077">
    <property type="term" value="C:primosome complex"/>
    <property type="evidence" value="ECO:0007669"/>
    <property type="project" value="UniProtKB-KW"/>
</dbReference>
<dbReference type="GO" id="GO:0003677">
    <property type="term" value="F:DNA binding"/>
    <property type="evidence" value="ECO:0007669"/>
    <property type="project" value="UniProtKB-KW"/>
</dbReference>
<dbReference type="GO" id="GO:0003899">
    <property type="term" value="F:DNA-directed RNA polymerase activity"/>
    <property type="evidence" value="ECO:0007669"/>
    <property type="project" value="InterPro"/>
</dbReference>
<dbReference type="GO" id="GO:0008270">
    <property type="term" value="F:zinc ion binding"/>
    <property type="evidence" value="ECO:0007669"/>
    <property type="project" value="UniProtKB-UniRule"/>
</dbReference>
<dbReference type="GO" id="GO:0006269">
    <property type="term" value="P:DNA replication, synthesis of primer"/>
    <property type="evidence" value="ECO:0000318"/>
    <property type="project" value="GO_Central"/>
</dbReference>
<dbReference type="CDD" id="cd03364">
    <property type="entry name" value="TOPRIM_DnaG_primases"/>
    <property type="match status" value="1"/>
</dbReference>
<dbReference type="FunFam" id="1.20.50.20:FF:000001">
    <property type="entry name" value="DNA primase"/>
    <property type="match status" value="1"/>
</dbReference>
<dbReference type="FunFam" id="3.40.1360.10:FF:000002">
    <property type="entry name" value="DNA primase"/>
    <property type="match status" value="1"/>
</dbReference>
<dbReference type="FunFam" id="3.90.580.10:FF:000001">
    <property type="entry name" value="DNA primase"/>
    <property type="match status" value="1"/>
</dbReference>
<dbReference type="FunFam" id="3.90.980.10:FF:000001">
    <property type="entry name" value="DNA primase"/>
    <property type="match status" value="1"/>
</dbReference>
<dbReference type="Gene3D" id="3.40.1360.10">
    <property type="match status" value="1"/>
</dbReference>
<dbReference type="Gene3D" id="3.90.980.10">
    <property type="entry name" value="DNA primase, catalytic core, N-terminal domain"/>
    <property type="match status" value="1"/>
</dbReference>
<dbReference type="Gene3D" id="1.10.860.10">
    <property type="entry name" value="DNAb Helicase, Chain A"/>
    <property type="match status" value="1"/>
</dbReference>
<dbReference type="Gene3D" id="1.20.50.20">
    <property type="entry name" value="DnaG, RNA polymerase domain, helical bundle"/>
    <property type="match status" value="1"/>
</dbReference>
<dbReference type="Gene3D" id="3.90.580.10">
    <property type="entry name" value="Zinc finger, CHC2-type domain"/>
    <property type="match status" value="1"/>
</dbReference>
<dbReference type="HAMAP" id="MF_00974">
    <property type="entry name" value="DNA_primase_DnaG"/>
    <property type="match status" value="1"/>
</dbReference>
<dbReference type="InterPro" id="IPR016136">
    <property type="entry name" value="DNA_helicase_N/primase_C"/>
</dbReference>
<dbReference type="InterPro" id="IPR037068">
    <property type="entry name" value="DNA_primase_core_N_sf"/>
</dbReference>
<dbReference type="InterPro" id="IPR019475">
    <property type="entry name" value="DNA_primase_DnaB-bd"/>
</dbReference>
<dbReference type="InterPro" id="IPR006295">
    <property type="entry name" value="DNA_primase_DnaG"/>
</dbReference>
<dbReference type="InterPro" id="IPR013173">
    <property type="entry name" value="DNA_primase_DnaG_DnaB-bd_dom"/>
</dbReference>
<dbReference type="InterPro" id="IPR036977">
    <property type="entry name" value="DNA_primase_Znf_CHC2"/>
</dbReference>
<dbReference type="InterPro" id="IPR030846">
    <property type="entry name" value="DnaG_bac"/>
</dbReference>
<dbReference type="InterPro" id="IPR013264">
    <property type="entry name" value="DNAG_N"/>
</dbReference>
<dbReference type="InterPro" id="IPR050219">
    <property type="entry name" value="DnaG_primase"/>
</dbReference>
<dbReference type="InterPro" id="IPR034151">
    <property type="entry name" value="TOPRIM_DnaG_bac"/>
</dbReference>
<dbReference type="InterPro" id="IPR006171">
    <property type="entry name" value="TOPRIM_dom"/>
</dbReference>
<dbReference type="InterPro" id="IPR002694">
    <property type="entry name" value="Znf_CHC2"/>
</dbReference>
<dbReference type="NCBIfam" id="TIGR01391">
    <property type="entry name" value="dnaG"/>
    <property type="match status" value="1"/>
</dbReference>
<dbReference type="PANTHER" id="PTHR30313">
    <property type="entry name" value="DNA PRIMASE"/>
    <property type="match status" value="1"/>
</dbReference>
<dbReference type="PANTHER" id="PTHR30313:SF2">
    <property type="entry name" value="DNA PRIMASE"/>
    <property type="match status" value="1"/>
</dbReference>
<dbReference type="Pfam" id="PF10410">
    <property type="entry name" value="DnaB_bind"/>
    <property type="match status" value="1"/>
</dbReference>
<dbReference type="Pfam" id="PF08278">
    <property type="entry name" value="DnaG_DnaB_bind"/>
    <property type="match status" value="1"/>
</dbReference>
<dbReference type="Pfam" id="PF08275">
    <property type="entry name" value="DNAG_N"/>
    <property type="match status" value="1"/>
</dbReference>
<dbReference type="Pfam" id="PF13155">
    <property type="entry name" value="Toprim_2"/>
    <property type="match status" value="1"/>
</dbReference>
<dbReference type="Pfam" id="PF01807">
    <property type="entry name" value="Zn_ribbon_DnaG"/>
    <property type="match status" value="1"/>
</dbReference>
<dbReference type="SMART" id="SM00766">
    <property type="entry name" value="DnaG_DnaB_bind"/>
    <property type="match status" value="1"/>
</dbReference>
<dbReference type="SMART" id="SM00493">
    <property type="entry name" value="TOPRIM"/>
    <property type="match status" value="1"/>
</dbReference>
<dbReference type="SMART" id="SM00400">
    <property type="entry name" value="ZnF_CHCC"/>
    <property type="match status" value="1"/>
</dbReference>
<dbReference type="SUPFAM" id="SSF56731">
    <property type="entry name" value="DNA primase core"/>
    <property type="match status" value="1"/>
</dbReference>
<dbReference type="SUPFAM" id="SSF117023">
    <property type="entry name" value="DNA primase DnaG, C-terminal domain"/>
    <property type="match status" value="1"/>
</dbReference>
<dbReference type="SUPFAM" id="SSF57783">
    <property type="entry name" value="Zinc beta-ribbon"/>
    <property type="match status" value="1"/>
</dbReference>
<dbReference type="PROSITE" id="PS50880">
    <property type="entry name" value="TOPRIM"/>
    <property type="match status" value="1"/>
</dbReference>
<accession>P07362</accession>
<feature type="chain" id="PRO_0000180516" description="DNA primase">
    <location>
        <begin position="1"/>
        <end position="581"/>
    </location>
</feature>
<feature type="domain" description="Toprim" evidence="1">
    <location>
        <begin position="259"/>
        <end position="341"/>
    </location>
</feature>
<feature type="zinc finger region" description="CHC2-type" evidence="1">
    <location>
        <begin position="40"/>
        <end position="64"/>
    </location>
</feature>
<feature type="binding site" evidence="1">
    <location>
        <position position="265"/>
    </location>
    <ligand>
        <name>Mg(2+)</name>
        <dbReference type="ChEBI" id="CHEBI:18420"/>
        <label>1</label>
        <note>catalytic</note>
    </ligand>
</feature>
<feature type="binding site" evidence="1">
    <location>
        <position position="309"/>
    </location>
    <ligand>
        <name>Mg(2+)</name>
        <dbReference type="ChEBI" id="CHEBI:18420"/>
        <label>1</label>
        <note>catalytic</note>
    </ligand>
</feature>
<feature type="binding site" evidence="1">
    <location>
        <position position="309"/>
    </location>
    <ligand>
        <name>Mg(2+)</name>
        <dbReference type="ChEBI" id="CHEBI:18420"/>
        <label>2</label>
    </ligand>
</feature>
<feature type="binding site" evidence="1">
    <location>
        <position position="311"/>
    </location>
    <ligand>
        <name>Mg(2+)</name>
        <dbReference type="ChEBI" id="CHEBI:18420"/>
        <label>2</label>
    </ligand>
</feature>
<sequence>MAGRIPRVFINDLLARTDIVDLIDVRVKLKKQGKNYHACCPFHNEKTPSFTVNGEKQFYHCFGCGAHGNAIDFLMNYDKLEFVETVEELAAMHNLEIPYEAGTGLSQIERHQRQNLYQLMNGLNDFYQQSLTHPAAKPARDYLQKRGLSAEIIQRFAIGFAPPGWDNALKRFGNNSDNKALLLDAGMLVNNEQGSTYDRFRNRVMFPIRDKRGRVIGFGGRVLGNDTPKYLNSPETDIFHKGRQLYGLYEAQQYSAEPQRLLVVEGYMDVVALAQYDINYAVASLGTSTTADHMHMLFRATNNVICCYDGDRAGRDAAWRALETAMPYMTDGRQVRFMFLPDGEDPDTLVRKEGKAAFEARMEQAQPLSTFLFNSLLPQVDLSSPDGSTQLAALALPLINQVPGDAHRIQLRQTLGLKLGIFDDSQLDRLVPKQAESGVSRPAPQLKRTTMRILIGLLVQNPDLAPLVPPLDALDQNKLPGLGLFKELVKTCLAQPGLTTGQLLELYRGTNDAATLEKLSMWDDIADKAIAEKTFTDSLNHMFDSLLQLRQEELIARDRTHGLSSEERRELWTLNQELARK</sequence>
<name>DNAG_SALTY</name>
<gene>
    <name evidence="1" type="primary">dnaG</name>
    <name type="ordered locus">STM3210</name>
</gene>
<reference key="1">
    <citation type="journal article" date="1985" name="Gene">
        <title>Nucleotide sequence of the rpsU-dnaG-rpoD operon from Salmonella typhimurium and a comparison of this sequence with the homologous operon of Escherichia coli.</title>
        <authorList>
            <person name="Erickson B.D."/>
            <person name="Burton Z.F."/>
            <person name="Watanabe K.K."/>
            <person name="Burgess R.R."/>
        </authorList>
    </citation>
    <scope>NUCLEOTIDE SEQUENCE [GENOMIC DNA]</scope>
</reference>
<reference key="2">
    <citation type="journal article" date="2001" name="Nature">
        <title>Complete genome sequence of Salmonella enterica serovar Typhimurium LT2.</title>
        <authorList>
            <person name="McClelland M."/>
            <person name="Sanderson K.E."/>
            <person name="Spieth J."/>
            <person name="Clifton S.W."/>
            <person name="Latreille P."/>
            <person name="Courtney L."/>
            <person name="Porwollik S."/>
            <person name="Ali J."/>
            <person name="Dante M."/>
            <person name="Du F."/>
            <person name="Hou S."/>
            <person name="Layman D."/>
            <person name="Leonard S."/>
            <person name="Nguyen C."/>
            <person name="Scott K."/>
            <person name="Holmes A."/>
            <person name="Grewal N."/>
            <person name="Mulvaney E."/>
            <person name="Ryan E."/>
            <person name="Sun H."/>
            <person name="Florea L."/>
            <person name="Miller W."/>
            <person name="Stoneking T."/>
            <person name="Nhan M."/>
            <person name="Waterston R."/>
            <person name="Wilson R.K."/>
        </authorList>
    </citation>
    <scope>NUCLEOTIDE SEQUENCE [LARGE SCALE GENOMIC DNA]</scope>
    <source>
        <strain>LT2 / SGSC1412 / ATCC 700720</strain>
    </source>
</reference>
<protein>
    <recommendedName>
        <fullName evidence="1">DNA primase</fullName>
        <ecNumber evidence="1">2.7.7.101</ecNumber>
    </recommendedName>
</protein>
<proteinExistence type="inferred from homology"/>
<evidence type="ECO:0000255" key="1">
    <source>
        <dbReference type="HAMAP-Rule" id="MF_00974"/>
    </source>
</evidence>
<organism>
    <name type="scientific">Salmonella typhimurium (strain LT2 / SGSC1412 / ATCC 700720)</name>
    <dbReference type="NCBI Taxonomy" id="99287"/>
    <lineage>
        <taxon>Bacteria</taxon>
        <taxon>Pseudomonadati</taxon>
        <taxon>Pseudomonadota</taxon>
        <taxon>Gammaproteobacteria</taxon>
        <taxon>Enterobacterales</taxon>
        <taxon>Enterobacteriaceae</taxon>
        <taxon>Salmonella</taxon>
    </lineage>
</organism>
<keyword id="KW-0235">DNA replication</keyword>
<keyword id="KW-0238">DNA-binding</keyword>
<keyword id="KW-0240">DNA-directed RNA polymerase</keyword>
<keyword id="KW-0460">Magnesium</keyword>
<keyword id="KW-0479">Metal-binding</keyword>
<keyword id="KW-0548">Nucleotidyltransferase</keyword>
<keyword id="KW-0639">Primosome</keyword>
<keyword id="KW-1185">Reference proteome</keyword>
<keyword id="KW-0804">Transcription</keyword>
<keyword id="KW-0808">Transferase</keyword>
<keyword id="KW-0862">Zinc</keyword>
<keyword id="KW-0863">Zinc-finger</keyword>
<comment type="function">
    <text evidence="1">RNA polymerase that catalyzes the synthesis of short RNA molecules used as primers for DNA polymerase during DNA replication.</text>
</comment>
<comment type="catalytic activity">
    <reaction evidence="1">
        <text>ssDNA + n NTP = ssDNA/pppN(pN)n-1 hybrid + (n-1) diphosphate.</text>
        <dbReference type="EC" id="2.7.7.101"/>
    </reaction>
</comment>
<comment type="cofactor">
    <cofactor evidence="1">
        <name>Zn(2+)</name>
        <dbReference type="ChEBI" id="CHEBI:29105"/>
    </cofactor>
    <text evidence="1">Binds 1 zinc ion per monomer.</text>
</comment>
<comment type="cofactor">
    <cofactor evidence="1">
        <name>Mg(2+)</name>
        <dbReference type="ChEBI" id="CHEBI:18420"/>
    </cofactor>
    <text evidence="1">Binds two Mg(2+) per subunit.</text>
</comment>
<comment type="subunit">
    <text evidence="1">Monomer. Interacts with DnaB.</text>
</comment>
<comment type="domain">
    <text evidence="1">Contains an N-terminal zinc-binding domain, a central core domain that contains the primase activity, and a C-terminal DnaB-binding domain.</text>
</comment>
<comment type="similarity">
    <text evidence="1">Belongs to the DnaG primase family.</text>
</comment>